<organism>
    <name type="scientific">Streptococcus pneumoniae (strain ATCC BAA-255 / R6)</name>
    <dbReference type="NCBI Taxonomy" id="171101"/>
    <lineage>
        <taxon>Bacteria</taxon>
        <taxon>Bacillati</taxon>
        <taxon>Bacillota</taxon>
        <taxon>Bacilli</taxon>
        <taxon>Lactobacillales</taxon>
        <taxon>Streptococcaceae</taxon>
        <taxon>Streptococcus</taxon>
    </lineage>
</organism>
<comment type="similarity">
    <text evidence="1">Belongs to the UPF0346 family.</text>
</comment>
<reference key="1">
    <citation type="journal article" date="2001" name="J. Bacteriol.">
        <title>Genome of the bacterium Streptococcus pneumoniae strain R6.</title>
        <authorList>
            <person name="Hoskins J."/>
            <person name="Alborn W.E. Jr."/>
            <person name="Arnold J."/>
            <person name="Blaszczak L.C."/>
            <person name="Burgett S."/>
            <person name="DeHoff B.S."/>
            <person name="Estrem S.T."/>
            <person name="Fritz L."/>
            <person name="Fu D.-J."/>
            <person name="Fuller W."/>
            <person name="Geringer C."/>
            <person name="Gilmour R."/>
            <person name="Glass J.S."/>
            <person name="Khoja H."/>
            <person name="Kraft A.R."/>
            <person name="Lagace R.E."/>
            <person name="LeBlanc D.J."/>
            <person name="Lee L.N."/>
            <person name="Lefkowitz E.J."/>
            <person name="Lu J."/>
            <person name="Matsushima P."/>
            <person name="McAhren S.M."/>
            <person name="McHenney M."/>
            <person name="McLeaster K."/>
            <person name="Mundy C.W."/>
            <person name="Nicas T.I."/>
            <person name="Norris F.H."/>
            <person name="O'Gara M."/>
            <person name="Peery R.B."/>
            <person name="Robertson G.T."/>
            <person name="Rockey P."/>
            <person name="Sun P.-M."/>
            <person name="Winkler M.E."/>
            <person name="Yang Y."/>
            <person name="Young-Bellido M."/>
            <person name="Zhao G."/>
            <person name="Zook C.A."/>
            <person name="Baltz R.H."/>
            <person name="Jaskunas S.R."/>
            <person name="Rosteck P.R. Jr."/>
            <person name="Skatrud P.L."/>
            <person name="Glass J.I."/>
        </authorList>
    </citation>
    <scope>NUCLEOTIDE SEQUENCE [LARGE SCALE GENOMIC DNA]</scope>
    <source>
        <strain>ATCC BAA-255 / R6</strain>
    </source>
</reference>
<gene>
    <name type="ordered locus">spr0848</name>
</gene>
<keyword id="KW-1185">Reference proteome</keyword>
<accession>Q8DQ47</accession>
<name>Y848_STRR6</name>
<evidence type="ECO:0000255" key="1">
    <source>
        <dbReference type="HAMAP-Rule" id="MF_01538"/>
    </source>
</evidence>
<protein>
    <recommendedName>
        <fullName evidence="1">UPF0346 protein spr0848</fullName>
    </recommendedName>
</protein>
<feature type="chain" id="PRO_0000164295" description="UPF0346 protein spr0848">
    <location>
        <begin position="1"/>
        <end position="71"/>
    </location>
</feature>
<proteinExistence type="inferred from homology"/>
<dbReference type="EMBL" id="AE007317">
    <property type="protein sequence ID" value="AAK99652.1"/>
    <property type="molecule type" value="Genomic_DNA"/>
</dbReference>
<dbReference type="PIR" id="H97977">
    <property type="entry name" value="H97977"/>
</dbReference>
<dbReference type="RefSeq" id="NP_358442.1">
    <property type="nucleotide sequence ID" value="NC_003098.1"/>
</dbReference>
<dbReference type="RefSeq" id="WP_001232082.1">
    <property type="nucleotide sequence ID" value="NC_003098.1"/>
</dbReference>
<dbReference type="SMR" id="Q8DQ47"/>
<dbReference type="STRING" id="171101.spr0848"/>
<dbReference type="KEGG" id="spr:spr0848"/>
<dbReference type="PATRIC" id="fig|171101.6.peg.936"/>
<dbReference type="eggNOG" id="COG4479">
    <property type="taxonomic scope" value="Bacteria"/>
</dbReference>
<dbReference type="HOGENOM" id="CLU_177534_1_0_9"/>
<dbReference type="Proteomes" id="UP000000586">
    <property type="component" value="Chromosome"/>
</dbReference>
<dbReference type="Gene3D" id="1.10.150.260">
    <property type="entry name" value="YozE SAM-like"/>
    <property type="match status" value="1"/>
</dbReference>
<dbReference type="HAMAP" id="MF_01538">
    <property type="entry name" value="UPF0346"/>
    <property type="match status" value="1"/>
</dbReference>
<dbReference type="InterPro" id="IPR010673">
    <property type="entry name" value="UPF0346"/>
</dbReference>
<dbReference type="InterPro" id="IPR023089">
    <property type="entry name" value="YozE_SAM-like"/>
</dbReference>
<dbReference type="InterPro" id="IPR036806">
    <property type="entry name" value="YozE_SAM-like_sf"/>
</dbReference>
<dbReference type="NCBIfam" id="NF010193">
    <property type="entry name" value="PRK13672.1"/>
    <property type="match status" value="1"/>
</dbReference>
<dbReference type="Pfam" id="PF06855">
    <property type="entry name" value="YozE_SAM_like"/>
    <property type="match status" value="1"/>
</dbReference>
<dbReference type="PIRSF" id="PIRSF037262">
    <property type="entry name" value="UCP037262"/>
    <property type="match status" value="1"/>
</dbReference>
<dbReference type="SUPFAM" id="SSF140652">
    <property type="entry name" value="YozE-like"/>
    <property type="match status" value="1"/>
</dbReference>
<sequence length="71" mass="8435">MRKSFYTWLMTERNPKSNSPKAILADLAFEEAAFPKHTDDFDEVSRFLEEHASFSFNLGDFDSIWQEYLEH</sequence>